<sequence length="144" mass="16684">MGASKVKQDMPPPGGYGPIDYKRNLPRRGLSGYSMLAIGIGTLIYGHWSIMKWNRERRRLQIEDFEARIALLPLLQAETDRRTLQMLRENLEEEAIIMKDVPDWKVGESVFHTTRWVPPLIGELYGLRTTEEALHASHGFMWYT</sequence>
<evidence type="ECO:0000250" key="1">
    <source>
        <dbReference type="UniProtKB" id="Q9P0J0"/>
    </source>
</evidence>
<evidence type="ECO:0000255" key="2"/>
<evidence type="ECO:0000305" key="3"/>
<dbReference type="EMBL" id="DQ885745">
    <property type="protein sequence ID" value="ABH12254.1"/>
    <property type="molecule type" value="mRNA"/>
</dbReference>
<dbReference type="RefSeq" id="NP_001266683.1">
    <property type="nucleotide sequence ID" value="NM_001279754.1"/>
</dbReference>
<dbReference type="SMR" id="Q0MQ89"/>
<dbReference type="STRING" id="9593.ENSGGOP00000005851"/>
<dbReference type="GeneID" id="101124593"/>
<dbReference type="KEGG" id="ggo:101124593"/>
<dbReference type="CTD" id="51079"/>
<dbReference type="InParanoid" id="Q0MQ89"/>
<dbReference type="OrthoDB" id="14758at9604"/>
<dbReference type="Proteomes" id="UP000001519">
    <property type="component" value="Unplaced"/>
</dbReference>
<dbReference type="GO" id="GO:0005737">
    <property type="term" value="C:cytoplasm"/>
    <property type="evidence" value="ECO:0000250"/>
    <property type="project" value="UniProtKB"/>
</dbReference>
<dbReference type="GO" id="GO:0005743">
    <property type="term" value="C:mitochondrial inner membrane"/>
    <property type="evidence" value="ECO:0007669"/>
    <property type="project" value="UniProtKB-SubCell"/>
</dbReference>
<dbReference type="GO" id="GO:0031966">
    <property type="term" value="C:mitochondrial membrane"/>
    <property type="evidence" value="ECO:0000250"/>
    <property type="project" value="UniProtKB"/>
</dbReference>
<dbReference type="GO" id="GO:0005739">
    <property type="term" value="C:mitochondrion"/>
    <property type="evidence" value="ECO:0000250"/>
    <property type="project" value="UniProtKB"/>
</dbReference>
<dbReference type="GO" id="GO:0005654">
    <property type="term" value="C:nucleoplasm"/>
    <property type="evidence" value="ECO:0000250"/>
    <property type="project" value="UniProtKB"/>
</dbReference>
<dbReference type="GO" id="GO:0098803">
    <property type="term" value="C:respiratory chain complex"/>
    <property type="evidence" value="ECO:0000250"/>
    <property type="project" value="UniProtKB"/>
</dbReference>
<dbReference type="GO" id="GO:0045271">
    <property type="term" value="C:respiratory chain complex I"/>
    <property type="evidence" value="ECO:0000250"/>
    <property type="project" value="UniProtKB"/>
</dbReference>
<dbReference type="GO" id="GO:0045892">
    <property type="term" value="P:negative regulation of DNA-templated transcription"/>
    <property type="evidence" value="ECO:0000250"/>
    <property type="project" value="UniProtKB"/>
</dbReference>
<dbReference type="InterPro" id="IPR009346">
    <property type="entry name" value="GRIM-19"/>
</dbReference>
<dbReference type="PANTHER" id="PTHR12966:SF0">
    <property type="entry name" value="NADH DEHYDROGENASE [UBIQUINONE] 1 ALPHA SUBCOMPLEX SUBUNIT 13"/>
    <property type="match status" value="1"/>
</dbReference>
<dbReference type="PANTHER" id="PTHR12966">
    <property type="entry name" value="NADH DEHYDROGENASE UBIQUINONE 1 ALPHA SUBCOMPLEX SUBUNIT 13"/>
    <property type="match status" value="1"/>
</dbReference>
<dbReference type="Pfam" id="PF06212">
    <property type="entry name" value="GRIM-19"/>
    <property type="match status" value="1"/>
</dbReference>
<feature type="chain" id="PRO_0000251820" description="NADH dehydrogenase [ubiquinone] 1 alpha subcomplex subunit 13">
    <location>
        <begin position="1"/>
        <end position="144"/>
    </location>
</feature>
<feature type="transmembrane region" description="Helical" evidence="2">
    <location>
        <begin position="30"/>
        <end position="51"/>
    </location>
</feature>
<protein>
    <recommendedName>
        <fullName>NADH dehydrogenase [ubiquinone] 1 alpha subcomplex subunit 13</fullName>
    </recommendedName>
    <alternativeName>
        <fullName>Complex I-B16.6</fullName>
        <shortName>CI-B16.6</shortName>
    </alternativeName>
    <alternativeName>
        <fullName>NADH-ubiquinone oxidoreductase B16.6 subunit</fullName>
    </alternativeName>
</protein>
<reference key="1">
    <citation type="journal article" date="2006" name="Gene">
        <title>Adaptive selection of mitochondrial complex I subunits during primate radiation.</title>
        <authorList>
            <person name="Mishmar D."/>
            <person name="Ruiz-Pesini E."/>
            <person name="Mondragon-Palomino M."/>
            <person name="Procaccio V."/>
            <person name="Gaut B."/>
            <person name="Wallace D.C."/>
        </authorList>
    </citation>
    <scope>NUCLEOTIDE SEQUENCE [MRNA]</scope>
</reference>
<accession>Q0MQ89</accession>
<gene>
    <name type="primary">NDUFA13</name>
</gene>
<organism>
    <name type="scientific">Gorilla gorilla gorilla</name>
    <name type="common">Western lowland gorilla</name>
    <dbReference type="NCBI Taxonomy" id="9595"/>
    <lineage>
        <taxon>Eukaryota</taxon>
        <taxon>Metazoa</taxon>
        <taxon>Chordata</taxon>
        <taxon>Craniata</taxon>
        <taxon>Vertebrata</taxon>
        <taxon>Euteleostomi</taxon>
        <taxon>Mammalia</taxon>
        <taxon>Eutheria</taxon>
        <taxon>Euarchontoglires</taxon>
        <taxon>Primates</taxon>
        <taxon>Haplorrhini</taxon>
        <taxon>Catarrhini</taxon>
        <taxon>Hominidae</taxon>
        <taxon>Gorilla</taxon>
    </lineage>
</organism>
<comment type="function">
    <text evidence="1">Accessory subunit of the mitochondrial membrane respiratory chain NADH dehydrogenase (Complex I), that is believed not to be involved in catalysis. Complex I functions in the transfer of electrons from NADH to the respiratory chain. The immediate electron acceptor for the enzyme is believed to be ubiquinone. Involved in the interferon/all-trans-retinoic acid (IFN/RA) induced cell death. This apoptotic activity is inhibited by interaction with viral IRF1. Prevents the transactivation of STAT3 target genes. May play a role in CARD15-mediated innate mucosal responses and serve to regulate intestinal epithelial cell responses to microbes.</text>
</comment>
<comment type="subunit">
    <text evidence="1">Complex I is composed of 45 different subunits. Interacts with CARD15, but not with CARD4. Interacts with STAT3, but not with STAT1, STAT2 and STAT5A. Interacts with OLFM4.</text>
</comment>
<comment type="subcellular location">
    <subcellularLocation>
        <location evidence="1">Mitochondrion inner membrane</location>
        <topology evidence="2">Single-pass membrane protein</topology>
        <orientation evidence="1">Matrix side</orientation>
    </subcellularLocation>
    <subcellularLocation>
        <location evidence="1">Nucleus</location>
    </subcellularLocation>
    <text evidence="1">Localizes mainly in the mitochondrion. May be translocated into the nucleus upon IFN/RA treatment.</text>
</comment>
<comment type="similarity">
    <text evidence="3">Belongs to the complex I NDUFA13 subunit family.</text>
</comment>
<keyword id="KW-0249">Electron transport</keyword>
<keyword id="KW-0472">Membrane</keyword>
<keyword id="KW-0496">Mitochondrion</keyword>
<keyword id="KW-0999">Mitochondrion inner membrane</keyword>
<keyword id="KW-0539">Nucleus</keyword>
<keyword id="KW-1185">Reference proteome</keyword>
<keyword id="KW-0679">Respiratory chain</keyword>
<keyword id="KW-0812">Transmembrane</keyword>
<keyword id="KW-1133">Transmembrane helix</keyword>
<keyword id="KW-0813">Transport</keyword>
<name>NDUAD_GORGO</name>
<proteinExistence type="evidence at transcript level"/>